<evidence type="ECO:0000250" key="1">
    <source>
        <dbReference type="UniProtKB" id="Q06830"/>
    </source>
</evidence>
<evidence type="ECO:0000255" key="2">
    <source>
        <dbReference type="PROSITE-ProRule" id="PRU00691"/>
    </source>
</evidence>
<evidence type="ECO:0000269" key="3">
    <source>
    </source>
</evidence>
<evidence type="ECO:0000305" key="4"/>
<evidence type="ECO:0000312" key="5">
    <source>
        <dbReference type="EMBL" id="BAN39701.1"/>
    </source>
</evidence>
<evidence type="ECO:0000312" key="6">
    <source>
        <dbReference type="EMBL" id="EAL43136.1"/>
    </source>
</evidence>
<organism evidence="6">
    <name type="scientific">Entamoeba histolytica (strain ATCC 30459 / HM-1:IMSS / ABRM)</name>
    <dbReference type="NCBI Taxonomy" id="294381"/>
    <lineage>
        <taxon>Eukaryota</taxon>
        <taxon>Amoebozoa</taxon>
        <taxon>Evosea</taxon>
        <taxon>Archamoebae</taxon>
        <taxon>Mastigamoebida</taxon>
        <taxon>Entamoebidae</taxon>
        <taxon>Entamoeba</taxon>
    </lineage>
</organism>
<proteinExistence type="evidence at protein level"/>
<dbReference type="EC" id="1.11.1.24" evidence="1"/>
<dbReference type="EMBL" id="AK421133">
    <property type="protein sequence ID" value="BAN39701.1"/>
    <property type="molecule type" value="mRNA"/>
</dbReference>
<dbReference type="EMBL" id="AK421329">
    <property type="protein sequence ID" value="BAN39888.1"/>
    <property type="molecule type" value="mRNA"/>
</dbReference>
<dbReference type="EMBL" id="X70996">
    <property type="protein sequence ID" value="CAA50324.1"/>
    <property type="molecule type" value="Genomic_DNA"/>
</dbReference>
<dbReference type="EMBL" id="DS571448">
    <property type="protein sequence ID" value="EAL43136.1"/>
    <property type="molecule type" value="Genomic_DNA"/>
</dbReference>
<dbReference type="EMBL" id="M75858">
    <property type="protein sequence ID" value="AAA29110.1"/>
    <property type="molecule type" value="mRNA"/>
</dbReference>
<dbReference type="EMBL" id="M35635">
    <property type="protein sequence ID" value="AAA29095.1"/>
    <property type="molecule type" value="mRNA"/>
</dbReference>
<dbReference type="PIR" id="S67947">
    <property type="entry name" value="S67947"/>
</dbReference>
<dbReference type="RefSeq" id="XP_648522.1">
    <property type="nucleotide sequence ID" value="XM_643430.2"/>
</dbReference>
<dbReference type="SMR" id="P19476"/>
<dbReference type="STRING" id="5759.C4MA54"/>
<dbReference type="EnsemblProtists" id="GAT98642">
    <property type="protein sequence ID" value="GAT98642"/>
    <property type="gene ID" value="CL6EHI_061980"/>
</dbReference>
<dbReference type="EnsemblProtists" id="rna_EHI_061980-1">
    <property type="protein sequence ID" value="rna_EHI_061980-1"/>
    <property type="gene ID" value="EHI_061980"/>
</dbReference>
<dbReference type="GeneID" id="3402777"/>
<dbReference type="KEGG" id="ehi:EHI_061980"/>
<dbReference type="VEuPathDB" id="AmoebaDB:EHI5A_261670"/>
<dbReference type="VEuPathDB" id="AmoebaDB:EHI7A_131930"/>
<dbReference type="VEuPathDB" id="AmoebaDB:EHI8A_147450"/>
<dbReference type="VEuPathDB" id="AmoebaDB:EHI_061980"/>
<dbReference type="VEuPathDB" id="AmoebaDB:KM1_154550"/>
<dbReference type="VEuPathDB" id="AmoebaDB:KM1_197060"/>
<dbReference type="eggNOG" id="KOG0852">
    <property type="taxonomic scope" value="Eukaryota"/>
</dbReference>
<dbReference type="HOGENOM" id="CLU_042529_21_1_1"/>
<dbReference type="OMA" id="YSHHAWC"/>
<dbReference type="OrthoDB" id="10259030at2759"/>
<dbReference type="Proteomes" id="UP000001926">
    <property type="component" value="Partially assembled WGS sequence"/>
</dbReference>
<dbReference type="GO" id="GO:0005829">
    <property type="term" value="C:cytosol"/>
    <property type="evidence" value="ECO:0000318"/>
    <property type="project" value="GO_Central"/>
</dbReference>
<dbReference type="GO" id="GO:0005886">
    <property type="term" value="C:plasma membrane"/>
    <property type="evidence" value="ECO:0007669"/>
    <property type="project" value="UniProtKB-SubCell"/>
</dbReference>
<dbReference type="GO" id="GO:0008379">
    <property type="term" value="F:thioredoxin peroxidase activity"/>
    <property type="evidence" value="ECO:0000318"/>
    <property type="project" value="GO_Central"/>
</dbReference>
<dbReference type="GO" id="GO:0045454">
    <property type="term" value="P:cell redox homeostasis"/>
    <property type="evidence" value="ECO:0000318"/>
    <property type="project" value="GO_Central"/>
</dbReference>
<dbReference type="GO" id="GO:0042744">
    <property type="term" value="P:hydrogen peroxide catabolic process"/>
    <property type="evidence" value="ECO:0000318"/>
    <property type="project" value="GO_Central"/>
</dbReference>
<dbReference type="GO" id="GO:0006979">
    <property type="term" value="P:response to oxidative stress"/>
    <property type="evidence" value="ECO:0000318"/>
    <property type="project" value="GO_Central"/>
</dbReference>
<dbReference type="CDD" id="cd03015">
    <property type="entry name" value="PRX_Typ2cys"/>
    <property type="match status" value="1"/>
</dbReference>
<dbReference type="FunFam" id="3.40.30.10:FF:000249">
    <property type="entry name" value="Peroxiredoxin"/>
    <property type="match status" value="1"/>
</dbReference>
<dbReference type="Gene3D" id="3.40.30.10">
    <property type="entry name" value="Glutaredoxin"/>
    <property type="match status" value="1"/>
</dbReference>
<dbReference type="InterPro" id="IPR000866">
    <property type="entry name" value="AhpC/TSA"/>
</dbReference>
<dbReference type="InterPro" id="IPR050217">
    <property type="entry name" value="Peroxiredoxin"/>
</dbReference>
<dbReference type="InterPro" id="IPR024706">
    <property type="entry name" value="Peroxiredoxin_AhpC-typ"/>
</dbReference>
<dbReference type="InterPro" id="IPR019479">
    <property type="entry name" value="Peroxiredoxin_C"/>
</dbReference>
<dbReference type="InterPro" id="IPR036249">
    <property type="entry name" value="Thioredoxin-like_sf"/>
</dbReference>
<dbReference type="InterPro" id="IPR013766">
    <property type="entry name" value="Thioredoxin_domain"/>
</dbReference>
<dbReference type="PANTHER" id="PTHR10681:SF171">
    <property type="entry name" value="PEROXIREDOXIN 4"/>
    <property type="match status" value="1"/>
</dbReference>
<dbReference type="PANTHER" id="PTHR10681">
    <property type="entry name" value="THIOREDOXIN PEROXIDASE"/>
    <property type="match status" value="1"/>
</dbReference>
<dbReference type="Pfam" id="PF10417">
    <property type="entry name" value="1-cysPrx_C"/>
    <property type="match status" value="1"/>
</dbReference>
<dbReference type="Pfam" id="PF00578">
    <property type="entry name" value="AhpC-TSA"/>
    <property type="match status" value="1"/>
</dbReference>
<dbReference type="PIRSF" id="PIRSF000239">
    <property type="entry name" value="AHPC"/>
    <property type="match status" value="1"/>
</dbReference>
<dbReference type="SUPFAM" id="SSF52833">
    <property type="entry name" value="Thioredoxin-like"/>
    <property type="match status" value="1"/>
</dbReference>
<dbReference type="PROSITE" id="PS51352">
    <property type="entry name" value="THIOREDOXIN_2"/>
    <property type="match status" value="1"/>
</dbReference>
<sequence>MSCNQQKECCKKECQEKECCKECCCPRIKAFKKFINTFEKAQIGKEAPEFKAPAYCPCGSIKEIDINEYRGKYVVLLFYPLDWTFVCPTEMIGYSELAGQLKEINCEVIGVSVDSVYCHQAWCEADKSKGGVGKLTFPLVSDIKRCISIKYGMLNVEAGIARRGYVIIDDKGKVRYIQMNDDGIGRSTEETIRIVKAIQFSDEHGAVCPLNWKPGKDTIEPTPDGIKKYLTAH</sequence>
<keyword id="KW-0049">Antioxidant</keyword>
<keyword id="KW-1003">Cell membrane</keyword>
<keyword id="KW-1015">Disulfide bond</keyword>
<keyword id="KW-0472">Membrane</keyword>
<keyword id="KW-0560">Oxidoreductase</keyword>
<keyword id="KW-0575">Peroxidase</keyword>
<keyword id="KW-0676">Redox-active center</keyword>
<keyword id="KW-1185">Reference proteome</keyword>
<reference evidence="5" key="1">
    <citation type="submission" date="2012-06" db="EMBL/GenBank/DDBJ databases">
        <title>Short 5' UTR of Entamoeba genes.</title>
        <authorList>
            <person name="Hiranuka K."/>
            <person name="Kumagai M."/>
            <person name="Wakaguri H."/>
            <person name="Suzuki Y."/>
            <person name="Sugano S."/>
            <person name="Watanabe J."/>
            <person name="Makioka A."/>
        </authorList>
    </citation>
    <scope>NUCLEOTIDE SEQUENCE [MRNA]</scope>
    <source>
        <strain evidence="5">ATCC 30459 / HM-1:IMSS / ABRM</strain>
    </source>
</reference>
<reference key="2">
    <citation type="journal article" date="1993" name="Trop. Med. Parasitol.">
        <title>Analysis of the genomic sequence encoding the 29-kDa cysteine-rich protein of Entamoeba histolytica.</title>
        <authorList>
            <person name="Bruchhaus I."/>
            <person name="Tannich E."/>
        </authorList>
    </citation>
    <scope>NUCLEOTIDE SEQUENCE [GENOMIC DNA]</scope>
</reference>
<reference evidence="6" key="3">
    <citation type="journal article" date="2005" name="Nature">
        <title>The genome of the protist parasite Entamoeba histolytica.</title>
        <authorList>
            <person name="Loftus B.J."/>
            <person name="Anderson I."/>
            <person name="Davies R."/>
            <person name="Alsmark U.C."/>
            <person name="Samuelson J."/>
            <person name="Amedeo P."/>
            <person name="Roncaglia P."/>
            <person name="Berriman M."/>
            <person name="Hirt R.P."/>
            <person name="Mann B.J."/>
            <person name="Nozaki T."/>
            <person name="Suh B."/>
            <person name="Pop M."/>
            <person name="Duchene M."/>
            <person name="Ackers J."/>
            <person name="Tannich E."/>
            <person name="Leippe M."/>
            <person name="Hofer M."/>
            <person name="Bruchhaus I."/>
            <person name="Willhoeft U."/>
            <person name="Bhattacharya A."/>
            <person name="Chillingworth T."/>
            <person name="Churcher C.M."/>
            <person name="Hance Z."/>
            <person name="Harris B."/>
            <person name="Harris D."/>
            <person name="Jagels K."/>
            <person name="Moule S."/>
            <person name="Mungall K.L."/>
            <person name="Ormond D."/>
            <person name="Squares R."/>
            <person name="Whitehead S."/>
            <person name="Quail M.A."/>
            <person name="Rabbinowitsch E."/>
            <person name="Norbertczak H."/>
            <person name="Price C."/>
            <person name="Wang Z."/>
            <person name="Guillen N."/>
            <person name="Gilchrist C."/>
            <person name="Stroup S.E."/>
            <person name="Bhattacharya S."/>
            <person name="Lohia A."/>
            <person name="Foster P.G."/>
            <person name="Sicheritz-Ponten T."/>
            <person name="Weber C."/>
            <person name="Singh U."/>
            <person name="Mukherjee C."/>
            <person name="El-Sayed N.M.A."/>
            <person name="Petri W.A."/>
            <person name="Clark C.G."/>
            <person name="Embley T.M."/>
            <person name="Barrell B.G."/>
            <person name="Fraser C.M."/>
            <person name="Hall N."/>
        </authorList>
    </citation>
    <scope>NUCLEOTIDE SEQUENCE [LARGE SCALE GENOMIC DNA]</scope>
    <source>
        <strain evidence="6">ATCC 30459 / HM-1:IMSS / ABRM</strain>
    </source>
</reference>
<reference key="4">
    <citation type="journal article" date="1992" name="Infect. Immun.">
        <title>Molecular and cellular characterization of the 29-kilodalton peripheral membrane protein of Entamoeba histolytica: differentiation between pathogenic and nonpathogenic isolates.</title>
        <authorList>
            <person name="Reed S.L."/>
            <person name="Flores B.M."/>
            <person name="Batzer M.A."/>
            <person name="Stein M.A."/>
            <person name="Stroeher V.L."/>
            <person name="Carlton J.E."/>
            <person name="Diedrich D.L."/>
            <person name="Torian B.E."/>
        </authorList>
    </citation>
    <scope>NUCLEOTIDE SEQUENCE [MRNA] OF 7-233</scope>
</reference>
<reference key="5">
    <citation type="journal article" date="1990" name="Proc. Natl. Acad. Sci. U.S.A.">
        <title>cDNA sequence analysis of a 29-kDa cysteine-rich surface antigen of pathogenic Entamoeba histolytica.</title>
        <authorList>
            <person name="Torian B.E."/>
            <person name="Flores B.M."/>
            <person name="Stroeher V.L."/>
            <person name="Hagen F.S."/>
            <person name="Stamm W.E."/>
        </authorList>
    </citation>
    <scope>NUCLEOTIDE SEQUENCE [MRNA] OF 9-233</scope>
    <source>
        <strain>H-302:NIH</strain>
    </source>
</reference>
<reference key="6">
    <citation type="journal article" date="1993" name="Mol. Microbiol.">
        <title>Structural analysis and demonstration of the 29 kDa antigen of pathogenic Entamoeba histolytica as the major accessible free thiol-containing surface protein.</title>
        <authorList>
            <person name="Flores B.M."/>
            <person name="Batzer M.A."/>
            <person name="Stein M.A."/>
            <person name="Petersen C."/>
            <person name="Diedrich D.L."/>
            <person name="Torian B.E."/>
        </authorList>
    </citation>
    <scope>SUBUNIT</scope>
    <scope>SUBCELLULAR LOCATION</scope>
</reference>
<feature type="chain" id="PRO_0000135100" description="Putative peroxiredoxin">
    <location>
        <begin position="1"/>
        <end position="233"/>
    </location>
</feature>
<feature type="domain" description="Thioredoxin" evidence="2">
    <location>
        <begin position="41"/>
        <end position="200"/>
    </location>
</feature>
<feature type="active site" description="Cysteine sulfenic acid (-SOH) intermediate" evidence="1">
    <location>
        <position position="87"/>
    </location>
</feature>
<feature type="disulfide bond" description="Interchain (with C-208); in linked form" evidence="1">
    <location>
        <position position="87"/>
    </location>
</feature>
<feature type="disulfide bond" description="Interchain (with C-87); in linked form" evidence="1">
    <location>
        <position position="208"/>
    </location>
</feature>
<feature type="sequence conflict" description="In Ref. 5; AAA29095." evidence="4" ref="5">
    <original>R</original>
    <variation>K</variation>
    <location>
        <position position="70"/>
    </location>
</feature>
<feature type="sequence conflict" description="In Ref. 4; AAA29110." evidence="4" ref="4">
    <original>N</original>
    <variation>D</variation>
    <location>
        <position position="105"/>
    </location>
</feature>
<name>CR29_ENTH1</name>
<comment type="function">
    <text evidence="1">Thiol-specific peroxidase that catalyzes the reduction of hydrogen peroxide and organic hydroperoxides to water and alcohols, respectively. Plays a role in cell protection against oxidative stress by detoxifying peroxides and as sensor of hydrogen peroxide-mediated signaling events.</text>
</comment>
<comment type="catalytic activity">
    <reaction evidence="1">
        <text>a hydroperoxide + [thioredoxin]-dithiol = an alcohol + [thioredoxin]-disulfide + H2O</text>
        <dbReference type="Rhea" id="RHEA:62620"/>
        <dbReference type="Rhea" id="RHEA-COMP:10698"/>
        <dbReference type="Rhea" id="RHEA-COMP:10700"/>
        <dbReference type="ChEBI" id="CHEBI:15377"/>
        <dbReference type="ChEBI" id="CHEBI:29950"/>
        <dbReference type="ChEBI" id="CHEBI:30879"/>
        <dbReference type="ChEBI" id="CHEBI:35924"/>
        <dbReference type="ChEBI" id="CHEBI:50058"/>
        <dbReference type="EC" id="1.11.1.24"/>
    </reaction>
</comment>
<comment type="subunit">
    <text evidence="3">Homodimer; disulfide-linked, upon oxidation.</text>
</comment>
<comment type="subcellular location">
    <subcellularLocation>
        <location>Cell membrane</location>
        <topology>Peripheral membrane protein</topology>
        <orientation evidence="3">Extracellular side</orientation>
    </subcellularLocation>
</comment>
<comment type="miscellaneous">
    <text evidence="1">The active site is a conserved redox-active cysteine residue, the peroxidatic cysteine (C(P)), which makes the nucleophilic attack on the peroxide substrate. The peroxide oxidizes the C(P)-SH to cysteine sulfenic acid (C(P)-SOH), which then reacts with another cysteine residue, the resolving cysteine (C(R)), to form a disulfide bridge. The disulfide is subsequently reduced by an appropriate electron donor to complete the catalytic cycle. In this typical 2-Cys peroxiredoxin, C(R) is provided by the other dimeric subunit to form an intersubunit disulfide. The disulfide is subsequently reduced by thioredoxin.</text>
</comment>
<comment type="similarity">
    <text evidence="4">Belongs to the peroxiredoxin family. AhpC/Prx1 subfamily.</text>
</comment>
<protein>
    <recommendedName>
        <fullName>Putative peroxiredoxin</fullName>
        <ecNumber evidence="1">1.11.1.24</ecNumber>
    </recommendedName>
    <alternativeName>
        <fullName>29 kDa cysteine-rich surface antigen</fullName>
    </alternativeName>
    <alternativeName>
        <fullName>Thioredoxin peroxidase</fullName>
    </alternativeName>
    <alternativeName>
        <fullName evidence="4">Thioredoxin-dependent peroxiredoxin</fullName>
    </alternativeName>
</protein>
<accession>P19476</accession>
<accession>A0A175JYR8</accession>
<accession>C4MA54</accession>
<accession>S0AZL5</accession>